<feature type="chain" id="PRO_0000236930" description="Phosphoenolpyruvate carboxykinase (ATP)">
    <location>
        <begin position="1"/>
        <end position="538"/>
    </location>
</feature>
<feature type="binding site" evidence="1">
    <location>
        <position position="61"/>
    </location>
    <ligand>
        <name>substrate</name>
    </ligand>
</feature>
<feature type="binding site" evidence="1">
    <location>
        <position position="195"/>
    </location>
    <ligand>
        <name>substrate</name>
    </ligand>
</feature>
<feature type="binding site" evidence="1">
    <location>
        <position position="201"/>
    </location>
    <ligand>
        <name>ATP</name>
        <dbReference type="ChEBI" id="CHEBI:30616"/>
    </ligand>
</feature>
<feature type="binding site" evidence="1">
    <location>
        <position position="201"/>
    </location>
    <ligand>
        <name>Mn(2+)</name>
        <dbReference type="ChEBI" id="CHEBI:29035"/>
    </ligand>
</feature>
<feature type="binding site" evidence="1">
    <location>
        <position position="201"/>
    </location>
    <ligand>
        <name>substrate</name>
    </ligand>
</feature>
<feature type="binding site" evidence="1">
    <location>
        <position position="220"/>
    </location>
    <ligand>
        <name>ATP</name>
        <dbReference type="ChEBI" id="CHEBI:30616"/>
    </ligand>
</feature>
<feature type="binding site" evidence="1">
    <location>
        <position position="220"/>
    </location>
    <ligand>
        <name>Mn(2+)</name>
        <dbReference type="ChEBI" id="CHEBI:29035"/>
    </ligand>
</feature>
<feature type="binding site" evidence="1">
    <location>
        <begin position="236"/>
        <end position="244"/>
    </location>
    <ligand>
        <name>ATP</name>
        <dbReference type="ChEBI" id="CHEBI:30616"/>
    </ligand>
</feature>
<feature type="binding site" evidence="1">
    <location>
        <position position="257"/>
    </location>
    <ligand>
        <name>Mn(2+)</name>
        <dbReference type="ChEBI" id="CHEBI:29035"/>
    </ligand>
</feature>
<feature type="binding site" evidence="1">
    <location>
        <position position="285"/>
    </location>
    <ligand>
        <name>ATP</name>
        <dbReference type="ChEBI" id="CHEBI:30616"/>
    </ligand>
</feature>
<feature type="binding site" evidence="1">
    <location>
        <position position="323"/>
    </location>
    <ligand>
        <name>ATP</name>
        <dbReference type="ChEBI" id="CHEBI:30616"/>
    </ligand>
</feature>
<feature type="binding site" evidence="1">
    <location>
        <position position="323"/>
    </location>
    <ligand>
        <name>substrate</name>
    </ligand>
</feature>
<feature type="binding site" evidence="1">
    <location>
        <position position="449"/>
    </location>
    <ligand>
        <name>ATP</name>
        <dbReference type="ChEBI" id="CHEBI:30616"/>
    </ligand>
</feature>
<sequence length="538" mass="58963">MPEIGVRNGAFGADKFGLQNLKAVYWNPGAPQLYEHALRSGEAMVNADGALCAETGIFTGRSPKDKFTVRDAATDKSVWWAGNQSMTPDQFAALYSDFLAHARNMTLFAQDLYGGADPNFRIKTRVFTELAWHSLFIRTLLRRPETSELAAFVPELTVIDLPSFRADPQRHGVRSENVVAIDFTRRIILIGGSHYAGEMKKSIFTTLNYYLPDQDVLPMHCSANVGPGGDSAIFFGLSGTGKTTLSADPGRTLIGDDEHGWSKDGIFNFEGGCYAKCIRLSREAEPEIYAASKRFGAVLENVVHDEVTRVPDFNDGSKTENTRSAYPLEFIPNASLTGCAGQPKNLVMLAADAFGVLPPIARLTPAQAMYHFLSGYTAKVAGTERDLGNEPQPEFSACFGSPFLPRHPGVYGNMLRALIAKHNVDCWLVNTGWTGGKYGTGRRMPIKVTRALLGAALDGSLRGVPFHDDRYFGFAVPTSVPGVEPHILDPIRTWADKIEFDRTARALIGMFRQNFTKFENDVDAEVREAAPGTMMAAE</sequence>
<comment type="function">
    <text evidence="1">Involved in the gluconeogenesis. Catalyzes the conversion of oxaloacetate (OAA) to phosphoenolpyruvate (PEP) through direct phosphoryl transfer between the nucleoside triphosphate and OAA.</text>
</comment>
<comment type="catalytic activity">
    <reaction evidence="1">
        <text>oxaloacetate + ATP = phosphoenolpyruvate + ADP + CO2</text>
        <dbReference type="Rhea" id="RHEA:18617"/>
        <dbReference type="ChEBI" id="CHEBI:16452"/>
        <dbReference type="ChEBI" id="CHEBI:16526"/>
        <dbReference type="ChEBI" id="CHEBI:30616"/>
        <dbReference type="ChEBI" id="CHEBI:58702"/>
        <dbReference type="ChEBI" id="CHEBI:456216"/>
        <dbReference type="EC" id="4.1.1.49"/>
    </reaction>
</comment>
<comment type="cofactor">
    <cofactor evidence="1">
        <name>Mn(2+)</name>
        <dbReference type="ChEBI" id="CHEBI:29035"/>
    </cofactor>
    <text evidence="1">Binds 1 Mn(2+) ion per subunit.</text>
</comment>
<comment type="pathway">
    <text evidence="1">Carbohydrate biosynthesis; gluconeogenesis.</text>
</comment>
<comment type="subcellular location">
    <subcellularLocation>
        <location evidence="1">Cytoplasm</location>
    </subcellularLocation>
</comment>
<comment type="similarity">
    <text evidence="1">Belongs to the phosphoenolpyruvate carboxykinase (ATP) family.</text>
</comment>
<accession>Q3SVS4</accession>
<organism>
    <name type="scientific">Nitrobacter winogradskyi (strain ATCC 25391 / DSM 10237 / CIP 104748 / NCIMB 11846 / Nb-255)</name>
    <dbReference type="NCBI Taxonomy" id="323098"/>
    <lineage>
        <taxon>Bacteria</taxon>
        <taxon>Pseudomonadati</taxon>
        <taxon>Pseudomonadota</taxon>
        <taxon>Alphaproteobacteria</taxon>
        <taxon>Hyphomicrobiales</taxon>
        <taxon>Nitrobacteraceae</taxon>
        <taxon>Nitrobacter</taxon>
    </lineage>
</organism>
<proteinExistence type="inferred from homology"/>
<keyword id="KW-0067">ATP-binding</keyword>
<keyword id="KW-0963">Cytoplasm</keyword>
<keyword id="KW-0210">Decarboxylase</keyword>
<keyword id="KW-0312">Gluconeogenesis</keyword>
<keyword id="KW-0456">Lyase</keyword>
<keyword id="KW-0464">Manganese</keyword>
<keyword id="KW-0479">Metal-binding</keyword>
<keyword id="KW-0547">Nucleotide-binding</keyword>
<keyword id="KW-1185">Reference proteome</keyword>
<evidence type="ECO:0000255" key="1">
    <source>
        <dbReference type="HAMAP-Rule" id="MF_00453"/>
    </source>
</evidence>
<gene>
    <name evidence="1" type="primary">pckA</name>
    <name type="ordered locus">Nwi_0350</name>
</gene>
<dbReference type="EC" id="4.1.1.49" evidence="1"/>
<dbReference type="EMBL" id="CP000115">
    <property type="protein sequence ID" value="ABA03617.1"/>
    <property type="molecule type" value="Genomic_DNA"/>
</dbReference>
<dbReference type="RefSeq" id="WP_011313682.1">
    <property type="nucleotide sequence ID" value="NC_007406.1"/>
</dbReference>
<dbReference type="SMR" id="Q3SVS4"/>
<dbReference type="STRING" id="323098.Nwi_0350"/>
<dbReference type="KEGG" id="nwi:Nwi_0350"/>
<dbReference type="eggNOG" id="COG1866">
    <property type="taxonomic scope" value="Bacteria"/>
</dbReference>
<dbReference type="HOGENOM" id="CLU_018247_0_1_5"/>
<dbReference type="OrthoDB" id="9806325at2"/>
<dbReference type="UniPathway" id="UPA00138"/>
<dbReference type="Proteomes" id="UP000002531">
    <property type="component" value="Chromosome"/>
</dbReference>
<dbReference type="GO" id="GO:0005829">
    <property type="term" value="C:cytosol"/>
    <property type="evidence" value="ECO:0007669"/>
    <property type="project" value="TreeGrafter"/>
</dbReference>
<dbReference type="GO" id="GO:0005524">
    <property type="term" value="F:ATP binding"/>
    <property type="evidence" value="ECO:0007669"/>
    <property type="project" value="UniProtKB-UniRule"/>
</dbReference>
<dbReference type="GO" id="GO:0046872">
    <property type="term" value="F:metal ion binding"/>
    <property type="evidence" value="ECO:0007669"/>
    <property type="project" value="UniProtKB-KW"/>
</dbReference>
<dbReference type="GO" id="GO:0004612">
    <property type="term" value="F:phosphoenolpyruvate carboxykinase (ATP) activity"/>
    <property type="evidence" value="ECO:0007669"/>
    <property type="project" value="UniProtKB-UniRule"/>
</dbReference>
<dbReference type="GO" id="GO:0006094">
    <property type="term" value="P:gluconeogenesis"/>
    <property type="evidence" value="ECO:0007669"/>
    <property type="project" value="UniProtKB-UniRule"/>
</dbReference>
<dbReference type="CDD" id="cd00484">
    <property type="entry name" value="PEPCK_ATP"/>
    <property type="match status" value="1"/>
</dbReference>
<dbReference type="Gene3D" id="3.90.228.20">
    <property type="match status" value="1"/>
</dbReference>
<dbReference type="Gene3D" id="3.40.449.10">
    <property type="entry name" value="Phosphoenolpyruvate Carboxykinase, domain 1"/>
    <property type="match status" value="1"/>
</dbReference>
<dbReference type="Gene3D" id="2.170.8.10">
    <property type="entry name" value="Phosphoenolpyruvate Carboxykinase, domain 2"/>
    <property type="match status" value="1"/>
</dbReference>
<dbReference type="HAMAP" id="MF_00453">
    <property type="entry name" value="PEPCK_ATP"/>
    <property type="match status" value="1"/>
</dbReference>
<dbReference type="InterPro" id="IPR001272">
    <property type="entry name" value="PEP_carboxykinase_ATP"/>
</dbReference>
<dbReference type="InterPro" id="IPR013035">
    <property type="entry name" value="PEP_carboxykinase_C"/>
</dbReference>
<dbReference type="InterPro" id="IPR008210">
    <property type="entry name" value="PEP_carboxykinase_N"/>
</dbReference>
<dbReference type="InterPro" id="IPR015994">
    <property type="entry name" value="PEPCK_ATP_CS"/>
</dbReference>
<dbReference type="NCBIfam" id="TIGR00224">
    <property type="entry name" value="pckA"/>
    <property type="match status" value="1"/>
</dbReference>
<dbReference type="NCBIfam" id="NF006820">
    <property type="entry name" value="PRK09344.1-2"/>
    <property type="match status" value="1"/>
</dbReference>
<dbReference type="NCBIfam" id="NF006821">
    <property type="entry name" value="PRK09344.1-3"/>
    <property type="match status" value="1"/>
</dbReference>
<dbReference type="NCBIfam" id="NF006822">
    <property type="entry name" value="PRK09344.1-4"/>
    <property type="match status" value="1"/>
</dbReference>
<dbReference type="PANTHER" id="PTHR30031:SF0">
    <property type="entry name" value="PHOSPHOENOLPYRUVATE CARBOXYKINASE (ATP)"/>
    <property type="match status" value="1"/>
</dbReference>
<dbReference type="PANTHER" id="PTHR30031">
    <property type="entry name" value="PHOSPHOENOLPYRUVATE CARBOXYKINASE ATP"/>
    <property type="match status" value="1"/>
</dbReference>
<dbReference type="Pfam" id="PF01293">
    <property type="entry name" value="PEPCK_ATP"/>
    <property type="match status" value="1"/>
</dbReference>
<dbReference type="PIRSF" id="PIRSF006294">
    <property type="entry name" value="PEP_crbxkin"/>
    <property type="match status" value="1"/>
</dbReference>
<dbReference type="SUPFAM" id="SSF68923">
    <property type="entry name" value="PEP carboxykinase N-terminal domain"/>
    <property type="match status" value="1"/>
</dbReference>
<dbReference type="SUPFAM" id="SSF53795">
    <property type="entry name" value="PEP carboxykinase-like"/>
    <property type="match status" value="1"/>
</dbReference>
<dbReference type="PROSITE" id="PS00532">
    <property type="entry name" value="PEPCK_ATP"/>
    <property type="match status" value="1"/>
</dbReference>
<name>PCKA_NITWN</name>
<protein>
    <recommendedName>
        <fullName evidence="1">Phosphoenolpyruvate carboxykinase (ATP)</fullName>
        <shortName evidence="1">PCK</shortName>
        <shortName evidence="1">PEP carboxykinase</shortName>
        <shortName evidence="1">PEPCK</shortName>
        <ecNumber evidence="1">4.1.1.49</ecNumber>
    </recommendedName>
</protein>
<reference key="1">
    <citation type="journal article" date="2006" name="Appl. Environ. Microbiol.">
        <title>Genome sequence of the chemolithoautotrophic nitrite-oxidizing bacterium Nitrobacter winogradskyi Nb-255.</title>
        <authorList>
            <person name="Starkenburg S.R."/>
            <person name="Chain P.S.G."/>
            <person name="Sayavedra-Soto L.A."/>
            <person name="Hauser L."/>
            <person name="Land M.L."/>
            <person name="Larimer F.W."/>
            <person name="Malfatti S.A."/>
            <person name="Klotz M.G."/>
            <person name="Bottomley P.J."/>
            <person name="Arp D.J."/>
            <person name="Hickey W.J."/>
        </authorList>
    </citation>
    <scope>NUCLEOTIDE SEQUENCE [LARGE SCALE GENOMIC DNA]</scope>
    <source>
        <strain>ATCC 25391 / DSM 10237 / CIP 104748 / NCIMB 11846 / Nb-255</strain>
    </source>
</reference>